<feature type="chain" id="PRO_0000167841" description="Retinoblastoma-like protein 2">
    <location>
        <begin position="1"/>
        <end position="1139"/>
    </location>
</feature>
<feature type="region of interest" description="Disordered" evidence="3">
    <location>
        <begin position="1"/>
        <end position="45"/>
    </location>
</feature>
<feature type="region of interest" description="Pocket; binds E1A">
    <location>
        <begin position="417"/>
        <end position="1024"/>
    </location>
</feature>
<feature type="region of interest" description="Domain A">
    <location>
        <begin position="417"/>
        <end position="616"/>
    </location>
</feature>
<feature type="region of interest" description="Spacer">
    <location>
        <begin position="617"/>
        <end position="827"/>
    </location>
</feature>
<feature type="region of interest" description="Disordered" evidence="3">
    <location>
        <begin position="654"/>
        <end position="678"/>
    </location>
</feature>
<feature type="region of interest" description="Disordered" evidence="3">
    <location>
        <begin position="810"/>
        <end position="831"/>
    </location>
</feature>
<feature type="region of interest" description="Domain B">
    <location>
        <begin position="828"/>
        <end position="1024"/>
    </location>
</feature>
<feature type="region of interest" description="Disordered" evidence="3">
    <location>
        <begin position="933"/>
        <end position="999"/>
    </location>
</feature>
<feature type="compositionally biased region" description="Pro residues" evidence="3">
    <location>
        <begin position="8"/>
        <end position="17"/>
    </location>
</feature>
<feature type="compositionally biased region" description="Acidic residues" evidence="3">
    <location>
        <begin position="21"/>
        <end position="33"/>
    </location>
</feature>
<feature type="compositionally biased region" description="Low complexity" evidence="3">
    <location>
        <begin position="810"/>
        <end position="827"/>
    </location>
</feature>
<feature type="compositionally biased region" description="Polar residues" evidence="3">
    <location>
        <begin position="941"/>
        <end position="955"/>
    </location>
</feature>
<feature type="compositionally biased region" description="Low complexity" evidence="3">
    <location>
        <begin position="964"/>
        <end position="973"/>
    </location>
</feature>
<feature type="compositionally biased region" description="Pro residues" evidence="3">
    <location>
        <begin position="977"/>
        <end position="987"/>
    </location>
</feature>
<feature type="modified residue" description="Phosphoserine" evidence="21">
    <location>
        <position position="413"/>
    </location>
</feature>
<feature type="modified residue" description="Phosphothreonine" evidence="2">
    <location>
        <position position="417"/>
    </location>
</feature>
<feature type="modified residue" description="Phosphoserine" evidence="4">
    <location>
        <position position="639"/>
    </location>
</feature>
<feature type="modified residue" description="Phosphothreonine" evidence="2">
    <location>
        <position position="642"/>
    </location>
</feature>
<feature type="modified residue" description="Phosphoserine" evidence="20 21">
    <location>
        <position position="662"/>
    </location>
</feature>
<feature type="modified residue" description="Phosphoserine" evidence="5 20">
    <location>
        <position position="672"/>
    </location>
</feature>
<feature type="modified residue" description="Phosphoserine" evidence="21">
    <location>
        <position position="688"/>
    </location>
</feature>
<feature type="modified residue" description="Phosphoserine" evidence="2">
    <location>
        <position position="948"/>
    </location>
</feature>
<feature type="modified residue" description="Phosphoserine" evidence="4">
    <location>
        <position position="952"/>
    </location>
</feature>
<feature type="modified residue" description="Phosphoserine" evidence="4">
    <location>
        <position position="966"/>
    </location>
</feature>
<feature type="modified residue" description="Phosphoserine" evidence="17">
    <location>
        <position position="971"/>
    </location>
</feature>
<feature type="modified residue" description="Phosphoserine" evidence="17">
    <location>
        <position position="972"/>
    </location>
</feature>
<feature type="modified residue" description="Phosphoserine" evidence="17">
    <location>
        <position position="973"/>
    </location>
</feature>
<feature type="modified residue" description="Phosphothreonine" evidence="17">
    <location>
        <position position="974"/>
    </location>
</feature>
<feature type="modified residue" description="Phosphoserine" evidence="17">
    <location>
        <position position="981"/>
    </location>
</feature>
<feature type="modified residue" description="Phosphoserine" evidence="4">
    <location>
        <position position="982"/>
    </location>
</feature>
<feature type="modified residue" description="Phosphothreonine" evidence="4">
    <location>
        <position position="986"/>
    </location>
</feature>
<feature type="modified residue" description="Phosphoserine" evidence="20">
    <location>
        <position position="1035"/>
    </location>
</feature>
<feature type="modified residue" description="Phosphoserine" evidence="21">
    <location>
        <position position="1068"/>
    </location>
</feature>
<feature type="modified residue" description="Phosphoserine" evidence="21">
    <location>
        <position position="1080"/>
    </location>
</feature>
<feature type="modified residue" description="Phosphoserine" evidence="21">
    <location>
        <position position="1112"/>
    </location>
</feature>
<feature type="glycosylation site" description="O-linked (GlcNAc) serine" evidence="12">
    <location>
        <position position="420"/>
    </location>
</feature>
<feature type="splice variant" id="VSP_054328" description="In isoform 2." evidence="15">
    <location>
        <begin position="1"/>
        <end position="216"/>
    </location>
</feature>
<feature type="splice variant" id="VSP_054329" description="In isoform 2." evidence="15">
    <location>
        <begin position="638"/>
        <end position="1042"/>
    </location>
</feature>
<feature type="sequence variant" id="VAR_069377" description="In dbSNP:rs139520629." evidence="11">
    <original>V</original>
    <variation>F</variation>
    <location>
        <position position="99"/>
    </location>
</feature>
<feature type="sequence variant" id="VAR_086722" description="In BRUWAG." evidence="13">
    <location>
        <begin position="186"/>
        <end position="1139"/>
    </location>
</feature>
<feature type="sequence variant" id="VAR_028437" description="In dbSNP:rs17800727.">
    <original>Y</original>
    <variation>C</variation>
    <location>
        <position position="210"/>
    </location>
</feature>
<feature type="sequence conflict" description="In Ref. 1; CAA53661 and 7; AAC50479." evidence="16" ref="1 7">
    <original>P</original>
    <variation>S</variation>
    <location>
        <position position="37"/>
    </location>
</feature>
<feature type="sequence conflict" description="In Ref. 1 and 7." evidence="16" ref="1 7">
    <original>A</original>
    <variation>P</variation>
    <location>
        <position position="64"/>
    </location>
</feature>
<feature type="sequence conflict" description="In Ref. 6; CAA52671." evidence="16" ref="6">
    <original>V</original>
    <variation>M</variation>
    <location>
        <position position="206"/>
    </location>
</feature>
<feature type="sequence conflict" description="In Ref. 5; AAH34490." evidence="16" ref="5">
    <original>R</original>
    <variation>H</variation>
    <location>
        <position position="1093"/>
    </location>
</feature>
<keyword id="KW-0002">3D-structure</keyword>
<keyword id="KW-0025">Alternative splicing</keyword>
<keyword id="KW-0131">Cell cycle</keyword>
<keyword id="KW-0156">Chromatin regulator</keyword>
<keyword id="KW-0225">Disease variant</keyword>
<keyword id="KW-0238">DNA-binding</keyword>
<keyword id="KW-0325">Glycoprotein</keyword>
<keyword id="KW-0945">Host-virus interaction</keyword>
<keyword id="KW-0991">Intellectual disability</keyword>
<keyword id="KW-0539">Nucleus</keyword>
<keyword id="KW-0597">Phosphoprotein</keyword>
<keyword id="KW-1267">Proteomics identification</keyword>
<keyword id="KW-1185">Reference proteome</keyword>
<keyword id="KW-0678">Repressor</keyword>
<keyword id="KW-0804">Transcription</keyword>
<keyword id="KW-0805">Transcription regulation</keyword>
<keyword id="KW-0043">Tumor suppressor</keyword>
<protein>
    <recommendedName>
        <fullName>Retinoblastoma-like protein 2</fullName>
    </recommendedName>
    <alternativeName>
        <fullName>130 kDa retinoblastoma-associated protein</fullName>
        <shortName>p130</shortName>
    </alternativeName>
    <alternativeName>
        <fullName>Retinoblastoma-related protein 2</fullName>
        <shortName>RBR-2</shortName>
    </alternativeName>
    <alternativeName>
        <fullName>pRb2</fullName>
    </alternativeName>
</protein>
<gene>
    <name type="primary">RBL2</name>
    <name type="synonym">RB2</name>
</gene>
<name>RBL2_HUMAN</name>
<organism>
    <name type="scientific">Homo sapiens</name>
    <name type="common">Human</name>
    <dbReference type="NCBI Taxonomy" id="9606"/>
    <lineage>
        <taxon>Eukaryota</taxon>
        <taxon>Metazoa</taxon>
        <taxon>Chordata</taxon>
        <taxon>Craniata</taxon>
        <taxon>Vertebrata</taxon>
        <taxon>Euteleostomi</taxon>
        <taxon>Mammalia</taxon>
        <taxon>Eutheria</taxon>
        <taxon>Euarchontoglires</taxon>
        <taxon>Primates</taxon>
        <taxon>Haplorrhini</taxon>
        <taxon>Catarrhini</taxon>
        <taxon>Hominidae</taxon>
        <taxon>Homo</taxon>
    </lineage>
</organism>
<sequence>MPSGGDQSPPPPPPPPAAAASDEEEEDDGEAEDAAPPAESPTPQIQQRFDELCSRLNMDEAARAEAWDSYRSMSESYTLEGNDLHWLACALYVACRKSVPTVSKGTVEGNYVSLTRILKCSEQSLIEFFNKMKKWEDMANLPPHFRERTERLERNFTVSAVIFKKYEPIFQDIFKYPQEEQPRQQRGRKQRRQPCTVSEIFHFCWVLFIYAKGNFPMISDDLVNSYHLLLCALDLVYGNALQCSNRKELVNPNFKGLSEDFHAKDSKPSSDPPCIIEKLCSLHDGLVLEAKGIKEHFWKPYIRKLYEKKLLKGKEENLTGFLEPGNFGESFKAINKAYEEYVLSVGNLDERIFLGEDAEEEIGTLSRCLNAGSGTETAERVQMKNILQQHFDKSKALRISTPLTGVRYIKENSPCVTPVSTATHSLSRLHTMLTGLRNAPSEKLEQILRTCSRDPTQAIANRLKEMFEIYSQHFQPDEDFSNCAKEIASKHFRFAEMLYYKVLESVIEQEQKRLGDMDLSGILEQDAFHRSLLACCLEVVTFSYKPPGNFPFITEIFDVPLYHFYKVIEVFIRAEDGLCREVVKHLNQIEEQILDHLAWKPESPLWEKIRDNENRVPTCEEVMPPQNLERADEICIAGSPLTPRRVTEVRADTGGLGRSITSPTTLYDRYSSPPASTTRRRLFVENDSPSDGGTPGRMPPQPLVNAVPVQNVSGETVSVTPVPGQTLVTMATATVTANNGQTVTIPVQGIANENGGITFFPVQVNVGGQAQAVTGSIQPLSAQALAGSLSSQQVTGTTLQVPGQVAIQQISPGGQQQKQGQSVTSSSNRPRKTSSLSLFFRKVYHLAAVRLRDLCAKLDISDELRKKIWTCFEFSIIQCPELMMDRHLDQLLMCAIYVMAKVTKEDKSFQNIMRCYRTQPQARSQVYRSVLIKGKRKRRNSGSSDSRSHQNSPTELNKDRTSRDSSPVMRSSSTLPVPQPSSAPPTPTRLTGANSDMEEEERGDLIQFYNNIYIKQIKTFAMKYSQANMDAPPLSPYPFVRTGSPRRIQLSQNHPVYISPHKNETMLSPREKIFYYFSNSPSKRLREINSMIRTGETPTKKRGILLEDGSESPAKRICPENHSALLRRLQDVANDRGSH</sequence>
<reference key="1">
    <citation type="journal article" date="1993" name="Genes Dev.">
        <title>The adenovirus E1A-associated 130-kD protein is encoded by a member of the retinoblastoma gene family and physically interacts with cyclins A and E.</title>
        <authorList>
            <person name="Li Y."/>
            <person name="Graham C."/>
            <person name="Lacy S."/>
            <person name="Duncan A.M.V."/>
            <person name="Whyte P."/>
        </authorList>
    </citation>
    <scope>NUCLEOTIDE SEQUENCE [MRNA] (ISOFORM 1)</scope>
    <source>
        <tissue>Placenta</tissue>
        <tissue>Spleen</tissue>
    </source>
</reference>
<reference key="2">
    <citation type="journal article" date="1993" name="Genes Dev.">
        <title>Isolation of the Rb-related p130 through its interaction with CDK2 and cyclins.</title>
        <authorList>
            <person name="Hannon G.J."/>
            <person name="Demetrick D."/>
            <person name="Beach D."/>
        </authorList>
    </citation>
    <scope>NUCLEOTIDE SEQUENCE [MRNA] (ISOFORM 1)</scope>
</reference>
<reference key="3">
    <citation type="journal article" date="2004" name="Nat. Genet.">
        <title>Complete sequencing and characterization of 21,243 full-length human cDNAs.</title>
        <authorList>
            <person name="Ota T."/>
            <person name="Suzuki Y."/>
            <person name="Nishikawa T."/>
            <person name="Otsuki T."/>
            <person name="Sugiyama T."/>
            <person name="Irie R."/>
            <person name="Wakamatsu A."/>
            <person name="Hayashi K."/>
            <person name="Sato H."/>
            <person name="Nagai K."/>
            <person name="Kimura K."/>
            <person name="Makita H."/>
            <person name="Sekine M."/>
            <person name="Obayashi M."/>
            <person name="Nishi T."/>
            <person name="Shibahara T."/>
            <person name="Tanaka T."/>
            <person name="Ishii S."/>
            <person name="Yamamoto J."/>
            <person name="Saito K."/>
            <person name="Kawai Y."/>
            <person name="Isono Y."/>
            <person name="Nakamura Y."/>
            <person name="Nagahari K."/>
            <person name="Murakami K."/>
            <person name="Yasuda T."/>
            <person name="Iwayanagi T."/>
            <person name="Wagatsuma M."/>
            <person name="Shiratori A."/>
            <person name="Sudo H."/>
            <person name="Hosoiri T."/>
            <person name="Kaku Y."/>
            <person name="Kodaira H."/>
            <person name="Kondo H."/>
            <person name="Sugawara M."/>
            <person name="Takahashi M."/>
            <person name="Kanda K."/>
            <person name="Yokoi T."/>
            <person name="Furuya T."/>
            <person name="Kikkawa E."/>
            <person name="Omura Y."/>
            <person name="Abe K."/>
            <person name="Kamihara K."/>
            <person name="Katsuta N."/>
            <person name="Sato K."/>
            <person name="Tanikawa M."/>
            <person name="Yamazaki M."/>
            <person name="Ninomiya K."/>
            <person name="Ishibashi T."/>
            <person name="Yamashita H."/>
            <person name="Murakawa K."/>
            <person name="Fujimori K."/>
            <person name="Tanai H."/>
            <person name="Kimata M."/>
            <person name="Watanabe M."/>
            <person name="Hiraoka S."/>
            <person name="Chiba Y."/>
            <person name="Ishida S."/>
            <person name="Ono Y."/>
            <person name="Takiguchi S."/>
            <person name="Watanabe S."/>
            <person name="Yosida M."/>
            <person name="Hotuta T."/>
            <person name="Kusano J."/>
            <person name="Kanehori K."/>
            <person name="Takahashi-Fujii A."/>
            <person name="Hara H."/>
            <person name="Tanase T.-O."/>
            <person name="Nomura Y."/>
            <person name="Togiya S."/>
            <person name="Komai F."/>
            <person name="Hara R."/>
            <person name="Takeuchi K."/>
            <person name="Arita M."/>
            <person name="Imose N."/>
            <person name="Musashino K."/>
            <person name="Yuuki H."/>
            <person name="Oshima A."/>
            <person name="Sasaki N."/>
            <person name="Aotsuka S."/>
            <person name="Yoshikawa Y."/>
            <person name="Matsunawa H."/>
            <person name="Ichihara T."/>
            <person name="Shiohata N."/>
            <person name="Sano S."/>
            <person name="Moriya S."/>
            <person name="Momiyama H."/>
            <person name="Satoh N."/>
            <person name="Takami S."/>
            <person name="Terashima Y."/>
            <person name="Suzuki O."/>
            <person name="Nakagawa S."/>
            <person name="Senoh A."/>
            <person name="Mizoguchi H."/>
            <person name="Goto Y."/>
            <person name="Shimizu F."/>
            <person name="Wakebe H."/>
            <person name="Hishigaki H."/>
            <person name="Watanabe T."/>
            <person name="Sugiyama A."/>
            <person name="Takemoto M."/>
            <person name="Kawakami B."/>
            <person name="Yamazaki M."/>
            <person name="Watanabe K."/>
            <person name="Kumagai A."/>
            <person name="Itakura S."/>
            <person name="Fukuzumi Y."/>
            <person name="Fujimori Y."/>
            <person name="Komiyama M."/>
            <person name="Tashiro H."/>
            <person name="Tanigami A."/>
            <person name="Fujiwara T."/>
            <person name="Ono T."/>
            <person name="Yamada K."/>
            <person name="Fujii Y."/>
            <person name="Ozaki K."/>
            <person name="Hirao M."/>
            <person name="Ohmori Y."/>
            <person name="Kawabata A."/>
            <person name="Hikiji T."/>
            <person name="Kobatake N."/>
            <person name="Inagaki H."/>
            <person name="Ikema Y."/>
            <person name="Okamoto S."/>
            <person name="Okitani R."/>
            <person name="Kawakami T."/>
            <person name="Noguchi S."/>
            <person name="Itoh T."/>
            <person name="Shigeta K."/>
            <person name="Senba T."/>
            <person name="Matsumura K."/>
            <person name="Nakajima Y."/>
            <person name="Mizuno T."/>
            <person name="Morinaga M."/>
            <person name="Sasaki M."/>
            <person name="Togashi T."/>
            <person name="Oyama M."/>
            <person name="Hata H."/>
            <person name="Watanabe M."/>
            <person name="Komatsu T."/>
            <person name="Mizushima-Sugano J."/>
            <person name="Satoh T."/>
            <person name="Shirai Y."/>
            <person name="Takahashi Y."/>
            <person name="Nakagawa K."/>
            <person name="Okumura K."/>
            <person name="Nagase T."/>
            <person name="Nomura N."/>
            <person name="Kikuchi H."/>
            <person name="Masuho Y."/>
            <person name="Yamashita R."/>
            <person name="Nakai K."/>
            <person name="Yada T."/>
            <person name="Nakamura Y."/>
            <person name="Ohara O."/>
            <person name="Isogai T."/>
            <person name="Sugano S."/>
        </authorList>
    </citation>
    <scope>NUCLEOTIDE SEQUENCE [LARGE SCALE MRNA] (ISOFORM 2)</scope>
    <source>
        <tissue>Trachea</tissue>
    </source>
</reference>
<reference key="4">
    <citation type="journal article" date="2004" name="Nature">
        <title>The sequence and analysis of duplication-rich human chromosome 16.</title>
        <authorList>
            <person name="Martin J."/>
            <person name="Han C."/>
            <person name="Gordon L.A."/>
            <person name="Terry A."/>
            <person name="Prabhakar S."/>
            <person name="She X."/>
            <person name="Xie G."/>
            <person name="Hellsten U."/>
            <person name="Chan Y.M."/>
            <person name="Altherr M."/>
            <person name="Couronne O."/>
            <person name="Aerts A."/>
            <person name="Bajorek E."/>
            <person name="Black S."/>
            <person name="Blumer H."/>
            <person name="Branscomb E."/>
            <person name="Brown N.C."/>
            <person name="Bruno W.J."/>
            <person name="Buckingham J.M."/>
            <person name="Callen D.F."/>
            <person name="Campbell C.S."/>
            <person name="Campbell M.L."/>
            <person name="Campbell E.W."/>
            <person name="Caoile C."/>
            <person name="Challacombe J.F."/>
            <person name="Chasteen L.A."/>
            <person name="Chertkov O."/>
            <person name="Chi H.C."/>
            <person name="Christensen M."/>
            <person name="Clark L.M."/>
            <person name="Cohn J.D."/>
            <person name="Denys M."/>
            <person name="Detter J.C."/>
            <person name="Dickson M."/>
            <person name="Dimitrijevic-Bussod M."/>
            <person name="Escobar J."/>
            <person name="Fawcett J.J."/>
            <person name="Flowers D."/>
            <person name="Fotopulos D."/>
            <person name="Glavina T."/>
            <person name="Gomez M."/>
            <person name="Gonzales E."/>
            <person name="Goodstein D."/>
            <person name="Goodwin L.A."/>
            <person name="Grady D.L."/>
            <person name="Grigoriev I."/>
            <person name="Groza M."/>
            <person name="Hammon N."/>
            <person name="Hawkins T."/>
            <person name="Haydu L."/>
            <person name="Hildebrand C.E."/>
            <person name="Huang W."/>
            <person name="Israni S."/>
            <person name="Jett J."/>
            <person name="Jewett P.B."/>
            <person name="Kadner K."/>
            <person name="Kimball H."/>
            <person name="Kobayashi A."/>
            <person name="Krawczyk M.-C."/>
            <person name="Leyba T."/>
            <person name="Longmire J.L."/>
            <person name="Lopez F."/>
            <person name="Lou Y."/>
            <person name="Lowry S."/>
            <person name="Ludeman T."/>
            <person name="Manohar C.F."/>
            <person name="Mark G.A."/>
            <person name="McMurray K.L."/>
            <person name="Meincke L.J."/>
            <person name="Morgan J."/>
            <person name="Moyzis R.K."/>
            <person name="Mundt M.O."/>
            <person name="Munk A.C."/>
            <person name="Nandkeshwar R.D."/>
            <person name="Pitluck S."/>
            <person name="Pollard M."/>
            <person name="Predki P."/>
            <person name="Parson-Quintana B."/>
            <person name="Ramirez L."/>
            <person name="Rash S."/>
            <person name="Retterer J."/>
            <person name="Ricke D.O."/>
            <person name="Robinson D.L."/>
            <person name="Rodriguez A."/>
            <person name="Salamov A."/>
            <person name="Saunders E.H."/>
            <person name="Scott D."/>
            <person name="Shough T."/>
            <person name="Stallings R.L."/>
            <person name="Stalvey M."/>
            <person name="Sutherland R.D."/>
            <person name="Tapia R."/>
            <person name="Tesmer J.G."/>
            <person name="Thayer N."/>
            <person name="Thompson L.S."/>
            <person name="Tice H."/>
            <person name="Torney D.C."/>
            <person name="Tran-Gyamfi M."/>
            <person name="Tsai M."/>
            <person name="Ulanovsky L.E."/>
            <person name="Ustaszewska A."/>
            <person name="Vo N."/>
            <person name="White P.S."/>
            <person name="Williams A.L."/>
            <person name="Wills P.L."/>
            <person name="Wu J.-R."/>
            <person name="Wu K."/>
            <person name="Yang J."/>
            <person name="DeJong P."/>
            <person name="Bruce D."/>
            <person name="Doggett N.A."/>
            <person name="Deaven L."/>
            <person name="Schmutz J."/>
            <person name="Grimwood J."/>
            <person name="Richardson P."/>
            <person name="Rokhsar D.S."/>
            <person name="Eichler E.E."/>
            <person name="Gilna P."/>
            <person name="Lucas S.M."/>
            <person name="Myers R.M."/>
            <person name="Rubin E.M."/>
            <person name="Pennacchio L.A."/>
        </authorList>
    </citation>
    <scope>NUCLEOTIDE SEQUENCE [LARGE SCALE GENOMIC DNA]</scope>
</reference>
<reference key="5">
    <citation type="journal article" date="2004" name="Genome Res.">
        <title>The status, quality, and expansion of the NIH full-length cDNA project: the Mammalian Gene Collection (MGC).</title>
        <authorList>
            <consortium name="The MGC Project Team"/>
        </authorList>
    </citation>
    <scope>NUCLEOTIDE SEQUENCE [LARGE SCALE MRNA] (ISOFORM 1)</scope>
    <source>
        <tissue>Testis</tissue>
    </source>
</reference>
<reference key="6">
    <citation type="journal article" date="1993" name="Oncogene">
        <title>Cloning of a new member of the retinoblastoma gene family (pRb2) which binds to the E1A transforming domain.</title>
        <authorList>
            <person name="Mayol X."/>
            <person name="Grana X."/>
            <person name="Baldi A."/>
            <person name="Sang N."/>
            <person name="Hu Q."/>
            <person name="Giordano A."/>
        </authorList>
    </citation>
    <scope>NUCLEOTIDE SEQUENCE [MRNA] OF 58-1139 (ISOFORM 1)</scope>
</reference>
<reference key="7">
    <citation type="journal article" date="1996" name="Proc. Natl. Acad. Sci. U.S.A.">
        <title>Genomic structure of the human retinoblastoma-related Rb2/p130 gene.</title>
        <authorList>
            <person name="Baldi A."/>
            <person name="Boccia V."/>
            <person name="Claudio P.P."/>
            <person name="de Luca A."/>
            <person name="Giordano A."/>
        </authorList>
    </citation>
    <scope>NUCLEOTIDE SEQUENCE [GENOMIC DNA] OF 1-80</scope>
    <source>
        <tissue>Placenta</tissue>
    </source>
</reference>
<reference key="8">
    <citation type="journal article" date="2000" name="Oncogene">
        <title>Phosphorylation of the retinoblastoma-related protein p130 in growth-arrested cells.</title>
        <authorList>
            <person name="Canhoto A.J."/>
            <person name="Chestukhin A."/>
            <person name="Litovchick L."/>
            <person name="DeCaprio J.A."/>
        </authorList>
    </citation>
    <scope>PHOSPHORYLATION AT SER-639; SER-952; SER-966; SER-971; SER-972; SER-973; THR-974; SER-981; SER-982 AND THR-986</scope>
    <scope>IDENTIFICATION BY MASS SPECTROMETRY</scope>
</reference>
<reference key="9">
    <citation type="journal article" date="2002" name="Cancer Cell">
        <title>Che-1 affects cell growth by interfering with the recruitment of HDAC1 by Rb.</title>
        <authorList>
            <person name="Bruno T."/>
            <person name="De Angelis R."/>
            <person name="De Nicola F."/>
            <person name="Barbato C."/>
            <person name="Di Padova M."/>
            <person name="Corbi N."/>
            <person name="Libri V."/>
            <person name="Benassi B."/>
            <person name="Mattei E."/>
            <person name="Chersi A."/>
            <person name="Soddu S."/>
            <person name="Floridi A."/>
            <person name="Passananti C."/>
            <person name="Fanciulli M."/>
        </authorList>
    </citation>
    <scope>INTERACTION WITH AATF</scope>
</reference>
<reference key="10">
    <citation type="journal article" date="2002" name="Genes Dev.">
        <title>The pRb-related protein p130 is regulated by phosphorylation-dependent proteolysis via the protein-ubiquitin ligase SCF(Skp2).</title>
        <authorList>
            <person name="Tedesco D."/>
            <person name="Lukas J."/>
            <person name="Reed S.I."/>
        </authorList>
    </citation>
    <scope>PHOSPHORYLATION AT SER-672</scope>
</reference>
<reference key="11">
    <citation type="journal article" date="2006" name="Mol. Cell">
        <title>The Rb-related p130 protein controls telomere lengthening through an interaction with a Rad50-interacting protein, RINT-1.</title>
        <authorList>
            <person name="Kong L.-J."/>
            <person name="Meloni A.R."/>
            <person name="Nevins J.R."/>
        </authorList>
    </citation>
    <scope>INTERACTION WITH RINT1</scope>
</reference>
<reference key="12">
    <citation type="journal article" date="2007" name="Cell Cycle">
        <title>LINC, a human complex that is related to pRB-containing complexes in invertebrates regulates the expression of G2/M genes.</title>
        <authorList>
            <person name="Schmit F."/>
            <person name="Korenjak M."/>
            <person name="Mannefeld M."/>
            <person name="Schmitt K."/>
            <person name="Franke C."/>
            <person name="von Eyss B."/>
            <person name="Gagrica S."/>
            <person name="Haenel F."/>
            <person name="Brehm A."/>
            <person name="Gaubatz S."/>
        </authorList>
    </citation>
    <scope>IDENTIFICATION IN THE DREAM COMPLEX</scope>
</reference>
<reference key="13">
    <citation type="journal article" date="2009" name="Anal. Chem.">
        <title>Lys-N and trypsin cover complementary parts of the phosphoproteome in a refined SCX-based approach.</title>
        <authorList>
            <person name="Gauci S."/>
            <person name="Helbig A.O."/>
            <person name="Slijper M."/>
            <person name="Krijgsveld J."/>
            <person name="Heck A.J."/>
            <person name="Mohammed S."/>
        </authorList>
    </citation>
    <scope>IDENTIFICATION BY MASS SPECTROMETRY [LARGE SCALE ANALYSIS]</scope>
</reference>
<reference key="14">
    <citation type="journal article" date="2009" name="Mol. Cell. Proteomics">
        <title>Large-scale proteomics analysis of the human kinome.</title>
        <authorList>
            <person name="Oppermann F.S."/>
            <person name="Gnad F."/>
            <person name="Olsen J.V."/>
            <person name="Hornberger R."/>
            <person name="Greff Z."/>
            <person name="Keri G."/>
            <person name="Mann M."/>
            <person name="Daub H."/>
        </authorList>
    </citation>
    <scope>IDENTIFICATION BY MASS SPECTROMETRY [LARGE SCALE ANALYSIS]</scope>
</reference>
<reference key="15">
    <citation type="journal article" date="2009" name="Sci. Signal.">
        <title>Quantitative phosphoproteomic analysis of T cell receptor signaling reveals system-wide modulation of protein-protein interactions.</title>
        <authorList>
            <person name="Mayya V."/>
            <person name="Lundgren D.H."/>
            <person name="Hwang S.-I."/>
            <person name="Rezaul K."/>
            <person name="Wu L."/>
            <person name="Eng J.K."/>
            <person name="Rodionov V."/>
            <person name="Han D.K."/>
        </authorList>
    </citation>
    <scope>PHOSPHORYLATION [LARGE SCALE ANALYSIS] AT SER-662; SER-672 AND SER-1035</scope>
    <scope>IDENTIFICATION BY MASS SPECTROMETRY [LARGE SCALE ANALYSIS]</scope>
    <source>
        <tissue>Leukemic T-cell</tissue>
    </source>
</reference>
<reference key="16">
    <citation type="journal article" date="2010" name="PLoS ONE">
        <title>JC virus small T antigen binds phosphatase PP2A and Rb family proteins and is required for efficient viral DNA replication activity.</title>
        <authorList>
            <person name="Bollag B."/>
            <person name="Hofstetter C.A."/>
            <person name="Reviriego-Mendoza M.M."/>
            <person name="Frisque R.J."/>
        </authorList>
    </citation>
    <scope>INTERACTION WITH JC VIRUS SMALL T ANTIGEN (MICROBIAL INFECTION)</scope>
</reference>
<reference key="17">
    <citation type="journal article" date="2012" name="EMBO J.">
        <title>Physical and functional interaction between PML and TBX2 in the establishment of cellular senescence.</title>
        <authorList>
            <person name="Martin N."/>
            <person name="Benhamed M."/>
            <person name="Nacerddine K."/>
            <person name="Demarque M.D."/>
            <person name="van Lohuizen M."/>
            <person name="Dejean A."/>
            <person name="Bischof O."/>
        </authorList>
    </citation>
    <scope>INTERACTION WITH PML</scope>
</reference>
<reference key="18">
    <citation type="journal article" date="2013" name="J. Proteome Res.">
        <title>Toward a comprehensive characterization of a human cancer cell phosphoproteome.</title>
        <authorList>
            <person name="Zhou H."/>
            <person name="Di Palma S."/>
            <person name="Preisinger C."/>
            <person name="Peng M."/>
            <person name="Polat A.N."/>
            <person name="Heck A.J."/>
            <person name="Mohammed S."/>
        </authorList>
    </citation>
    <scope>PHOSPHORYLATION [LARGE SCALE ANALYSIS] AT SER-413; SER-662; SER-688; SER-1068; SER-1080 AND SER-1112</scope>
    <scope>IDENTIFICATION BY MASS SPECTROMETRY [LARGE SCALE ANALYSIS]</scope>
    <source>
        <tissue>Cervix carcinoma</tissue>
        <tissue>Erythroleukemia</tissue>
    </source>
</reference>
<reference key="19">
    <citation type="journal article" date="2014" name="J. Proteomics">
        <title>An enzyme assisted RP-RPLC approach for in-depth analysis of human liver phosphoproteome.</title>
        <authorList>
            <person name="Bian Y."/>
            <person name="Song C."/>
            <person name="Cheng K."/>
            <person name="Dong M."/>
            <person name="Wang F."/>
            <person name="Huang J."/>
            <person name="Sun D."/>
            <person name="Wang L."/>
            <person name="Ye M."/>
            <person name="Zou H."/>
        </authorList>
    </citation>
    <scope>IDENTIFICATION BY MASS SPECTROMETRY [LARGE SCALE ANALYSIS]</scope>
    <source>
        <tissue>Liver</tissue>
    </source>
</reference>
<reference key="20">
    <citation type="journal article" date="2012" name="N. Engl. J. Med.">
        <title>Diagnostic exome sequencing in persons with severe intellectual disability.</title>
        <authorList>
            <person name="de Ligt J."/>
            <person name="Willemsen M.H."/>
            <person name="van Bon B.W."/>
            <person name="Kleefstra T."/>
            <person name="Yntema H.G."/>
            <person name="Kroes T."/>
            <person name="Vulto-van Silfhout A.T."/>
            <person name="Koolen D.A."/>
            <person name="de Vries P."/>
            <person name="Gilissen C."/>
            <person name="del Rosario M."/>
            <person name="Hoischen A."/>
            <person name="Scheffer H."/>
            <person name="de Vries B.B."/>
            <person name="Brunner H.G."/>
            <person name="Veltman J.A."/>
            <person name="Vissers L.E."/>
        </authorList>
    </citation>
    <scope>VARIANT PHE-99</scope>
</reference>
<reference key="21">
    <citation type="journal article" date="2020" name="Ann. Clin. Transl. Neurol.">
        <title>Biallelic loss-of-function variants in RBL2 in siblings with a neurodevelopmental disorder.</title>
        <authorList>
            <person name="Brunet T."/>
            <person name="Radivojkov-Blagojevic M."/>
            <person name="Lichtner P."/>
            <person name="Kraus V."/>
            <person name="Meitinger T."/>
            <person name="Wagner M."/>
        </authorList>
    </citation>
    <scope>VARIANT BRUWAG 186-ARG--HIS-1139 DEL</scope>
    <scope>INVOLVEMENT IN BRUWAG</scope>
</reference>
<reference key="22">
    <citation type="journal article" date="2021" name="J. Hum. Genet.">
        <title>RBL2 bi-allelic truncating variants cause severe motor and cognitive impairment without evidence for abnormalities in DNA methylation or telomeric function.</title>
        <authorList>
            <person name="Samra N."/>
            <person name="Toubiana S."/>
            <person name="Yttervik H."/>
            <person name="Tzur-Gilat A."/>
            <person name="Morani I."/>
            <person name="Itzkovich C."/>
            <person name="Giladi L."/>
            <person name="Abu Jabal K."/>
            <person name="Cao J.Z."/>
            <person name="Godley L.A."/>
            <person name="Mory A."/>
            <person name="Baris Feldman H."/>
            <person name="Tveten K."/>
            <person name="Selig S."/>
            <person name="Weiss K."/>
        </authorList>
    </citation>
    <scope>INVOLVEMENT IN BRUWAG</scope>
</reference>
<reference evidence="18 19" key="23">
    <citation type="journal article" date="2015" name="Nat. Struct. Mol. Biol.">
        <title>The active site of O-GlcNAc transferase imposes constraints on substrate sequence.</title>
        <authorList>
            <person name="Pathak S."/>
            <person name="Alonso J."/>
            <person name="Schimpl M."/>
            <person name="Rafie K."/>
            <person name="Blair D.E."/>
            <person name="Borodkin V.S."/>
            <person name="Albarbarawi O."/>
            <person name="van Aalten D.M.F."/>
        </authorList>
    </citation>
    <scope>X-RAY CRYSTALLOGRAPHY (2.05 ANGSTROMS) OF 416-423 IN COMPLEX WITH OGT</scope>
    <scope>GLYCOSYLATION AT SER-420</scope>
</reference>
<comment type="function">
    <text>Key regulator of entry into cell division. Directly involved in heterochromatin formation by maintaining overall chromatin structure and, in particular, that of constitutive heterochromatin by stabilizing histone methylation. Recruits and targets histone methyltransferases KMT5B and KMT5C, leading to epigenetic transcriptional repression. Controls histone H4 'Lys-20' trimethylation. Probably acts as a transcription repressor by recruiting chromatin-modifying enzymes to promoters. Potent inhibitor of E2F-mediated trans-activation, associates preferentially with E2F5. Binds to cyclins A and E. Binds to and may be involved in the transforming capacity of the adenovirus E1A protein. May act as a tumor suppressor.</text>
</comment>
<comment type="subunit">
    <text evidence="1 2 6 7 8 10">Interacts with AATF. Interacts with KMT5B, KMT5C and USP4 (By similarity). Component of the DREAM complex (also named LINC complex) at least composed of E2F4, E2F5, LIN9, LIN37, LIN52, LIN54, MYBL1, MYBL2, RBL1, RBL2, RBBP4, TFDP1 and TFDP2. The complex exists in quiescent cells where it represses cell cycle-dependent genes. It dissociates in S phase when LIN9, LIN37, LIN52 and LIN54 form a subcomplex that binds to MYBL2. Interacts with RINT1. Interacts with PML (isoform PML-1, isoform PML-2, isoform PML-3, isoform PML-4 and isoform PML-5). Interacts with RBBP9 (By similarity). Interacts with CD53 (By similarity).</text>
</comment>
<comment type="subunit">
    <text evidence="9">(Microbial infection) Interacts with JC virus small t antigen.</text>
</comment>
<comment type="interaction">
    <interactant intactId="EBI-971439">
        <id>Q08999</id>
    </interactant>
    <interactant intactId="EBI-295644">
        <id>P11802</id>
        <label>CDK4</label>
    </interactant>
    <organismsDiffer>false</organismsDiffer>
    <experiments>2</experiments>
</comment>
<comment type="interaction">
    <interactant intactId="EBI-971439">
        <id>Q08999</id>
    </interactant>
    <interactant intactId="EBI-715527">
        <id>Q13574-2</id>
        <label>DGKZ</label>
    </interactant>
    <organismsDiffer>false</organismsDiffer>
    <experiments>2</experiments>
</comment>
<comment type="interaction">
    <interactant intactId="EBI-971439">
        <id>Q08999</id>
    </interactant>
    <interactant intactId="EBI-448943">
        <id>Q16254</id>
        <label>E2F4</label>
    </interactant>
    <organismsDiffer>false</organismsDiffer>
    <experiments>7</experiments>
</comment>
<comment type="interaction">
    <interactant intactId="EBI-971439">
        <id>Q08999</id>
    </interactant>
    <interactant intactId="EBI-1389411">
        <id>Q6MZP7</id>
        <label>LIN54</label>
    </interactant>
    <organismsDiffer>false</organismsDiffer>
    <experiments>10</experiments>
</comment>
<comment type="interaction">
    <interactant intactId="EBI-971439">
        <id>Q08999</id>
    </interactant>
    <interactant intactId="EBI-712311">
        <id>P67775</id>
        <label>PPP2CA</label>
    </interactant>
    <organismsDiffer>false</organismsDiffer>
    <experiments>2</experiments>
</comment>
<comment type="interaction">
    <interactant intactId="EBI-971439">
        <id>Q08999</id>
    </interactant>
    <interactant intactId="EBI-11525639">
        <id>I6L8A6</id>
        <label>RBBP8</label>
    </interactant>
    <organismsDiffer>false</organismsDiffer>
    <experiments>3</experiments>
</comment>
<comment type="interaction">
    <interactant intactId="EBI-971439">
        <id>Q08999</id>
    </interactant>
    <interactant intactId="EBI-10203615">
        <id>Q99708-2</id>
        <label>RBBP8</label>
    </interactant>
    <organismsDiffer>false</organismsDiffer>
    <experiments>3</experiments>
</comment>
<comment type="interaction">
    <interactant intactId="EBI-971439">
        <id>Q08999</id>
    </interactant>
    <interactant intactId="EBI-1208116">
        <id>P24610</id>
        <label>Pax3</label>
    </interactant>
    <organismsDiffer>true</organismsDiffer>
    <experiments>3</experiments>
</comment>
<comment type="interaction">
    <interactant intactId="EBI-971439">
        <id>Q08999</id>
    </interactant>
    <interactant intactId="EBI-1802585">
        <id>Q923E4</id>
        <label>Sirt1</label>
    </interactant>
    <organismsDiffer>true</organismsDiffer>
    <experiments>2</experiments>
</comment>
<comment type="interaction">
    <interactant intactId="EBI-971439">
        <id>Q08999</id>
    </interactant>
    <interactant intactId="EBI-1208174">
        <id>Q61412</id>
        <label>Vsx2</label>
    </interactant>
    <organismsDiffer>true</organismsDiffer>
    <experiments>4</experiments>
</comment>
<comment type="interaction">
    <interactant intactId="EBI-971439">
        <id>Q08999</id>
    </interactant>
    <interactant intactId="EBI-2603114">
        <id>P03255</id>
    </interactant>
    <organismsDiffer>true</organismsDiffer>
    <experiments>2</experiments>
</comment>
<comment type="subcellular location">
    <subcellularLocation>
        <location>Nucleus</location>
    </subcellularLocation>
</comment>
<comment type="alternative products">
    <event type="alternative splicing"/>
    <isoform>
        <id>Q08999-1</id>
        <name>1</name>
        <sequence type="displayed"/>
    </isoform>
    <isoform>
        <id>Q08999-2</id>
        <name>2</name>
        <sequence type="described" ref="VSP_054328 VSP_054329"/>
    </isoform>
</comment>
<comment type="developmental stage">
    <text>G0-restricted expression.</text>
</comment>
<comment type="PTM">
    <text evidence="4 5">During G0 and early G1 phase of the cell cycle, phosphorylated on Ser-639 and on 5 sites within the domain B. Phosphorylation on Ser-672 in G1 leads to its ubiquitin-dependent proteolysis.</text>
</comment>
<comment type="disease" evidence="13 14">
    <disease id="DI-06308">
        <name>Brunet-Wagner neurodevelopmental syndrome</name>
        <acronym>BRUWAG</acronym>
        <description>An autosomal recessive disorder characterized by severe developmental delay, intellectual disability, poor or absent speech, infantile hypotonia, inability to walk, behavioral abnormalities, and dysmorphic features.</description>
        <dbReference type="MIM" id="619690"/>
    </disease>
    <text>The disease is caused by variants affecting the gene represented in this entry.</text>
</comment>
<comment type="similarity">
    <text evidence="16">Belongs to the retinoblastoma protein (RB) family.</text>
</comment>
<comment type="online information" name="Atlas of Genetics and Cytogenetics in Oncology and Haematology">
    <link uri="https://atlasgeneticsoncology.org/gene/443/RBL2"/>
</comment>
<evidence type="ECO:0000250" key="1">
    <source>
        <dbReference type="UniProtKB" id="O55081"/>
    </source>
</evidence>
<evidence type="ECO:0000250" key="2">
    <source>
        <dbReference type="UniProtKB" id="Q64700"/>
    </source>
</evidence>
<evidence type="ECO:0000256" key="3">
    <source>
        <dbReference type="SAM" id="MobiDB-lite"/>
    </source>
</evidence>
<evidence type="ECO:0000269" key="4">
    <source>
    </source>
</evidence>
<evidence type="ECO:0000269" key="5">
    <source>
    </source>
</evidence>
<evidence type="ECO:0000269" key="6">
    <source>
    </source>
</evidence>
<evidence type="ECO:0000269" key="7">
    <source>
    </source>
</evidence>
<evidence type="ECO:0000269" key="8">
    <source>
    </source>
</evidence>
<evidence type="ECO:0000269" key="9">
    <source>
    </source>
</evidence>
<evidence type="ECO:0000269" key="10">
    <source>
    </source>
</evidence>
<evidence type="ECO:0000269" key="11">
    <source>
    </source>
</evidence>
<evidence type="ECO:0000269" key="12">
    <source>
    </source>
</evidence>
<evidence type="ECO:0000269" key="13">
    <source>
    </source>
</evidence>
<evidence type="ECO:0000269" key="14">
    <source>
    </source>
</evidence>
<evidence type="ECO:0000303" key="15">
    <source>
    </source>
</evidence>
<evidence type="ECO:0000305" key="16"/>
<evidence type="ECO:0000305" key="17">
    <source>
    </source>
</evidence>
<evidence type="ECO:0007744" key="18">
    <source>
        <dbReference type="PDB" id="4XI9"/>
    </source>
</evidence>
<evidence type="ECO:0007744" key="19">
    <source>
        <dbReference type="PDB" id="5C1D"/>
    </source>
</evidence>
<evidence type="ECO:0007744" key="20">
    <source>
    </source>
</evidence>
<evidence type="ECO:0007744" key="21">
    <source>
    </source>
</evidence>
<proteinExistence type="evidence at protein level"/>
<dbReference type="EMBL" id="X76061">
    <property type="protein sequence ID" value="CAA53661.1"/>
    <property type="molecule type" value="mRNA"/>
</dbReference>
<dbReference type="EMBL" id="S67171">
    <property type="protein sequence ID" value="AAB29227.1"/>
    <property type="molecule type" value="mRNA"/>
</dbReference>
<dbReference type="EMBL" id="AK304283">
    <property type="protein sequence ID" value="BAH14149.1"/>
    <property type="molecule type" value="mRNA"/>
</dbReference>
<dbReference type="EMBL" id="AC007342">
    <property type="status" value="NOT_ANNOTATED_CDS"/>
    <property type="molecule type" value="Genomic_DNA"/>
</dbReference>
<dbReference type="EMBL" id="BC034490">
    <property type="protein sequence ID" value="AAH34490.1"/>
    <property type="molecule type" value="mRNA"/>
</dbReference>
<dbReference type="EMBL" id="X74594">
    <property type="protein sequence ID" value="CAA52671.1"/>
    <property type="molecule type" value="mRNA"/>
</dbReference>
<dbReference type="EMBL" id="U53220">
    <property type="protein sequence ID" value="AAC50479.1"/>
    <property type="molecule type" value="Genomic_DNA"/>
</dbReference>
<dbReference type="CCDS" id="CCDS10748.1">
    <molecule id="Q08999-1"/>
</dbReference>
<dbReference type="PIR" id="A49370">
    <property type="entry name" value="A49370"/>
</dbReference>
<dbReference type="RefSeq" id="NP_001310537.1">
    <molecule id="Q08999-1"/>
    <property type="nucleotide sequence ID" value="NM_001323608.2"/>
</dbReference>
<dbReference type="RefSeq" id="NP_005602.3">
    <molecule id="Q08999-1"/>
    <property type="nucleotide sequence ID" value="NM_005611.3"/>
</dbReference>
<dbReference type="PDB" id="4XI9">
    <property type="method" value="X-ray"/>
    <property type="resolution" value="3.10 A"/>
    <property type="chains" value="E/F/G/H=416-422"/>
</dbReference>
<dbReference type="PDB" id="5C1D">
    <property type="method" value="X-ray"/>
    <property type="resolution" value="2.05 A"/>
    <property type="chains" value="C=416-422"/>
</dbReference>
<dbReference type="PDBsum" id="4XI9"/>
<dbReference type="PDBsum" id="5C1D"/>
<dbReference type="SMR" id="Q08999"/>
<dbReference type="BioGRID" id="111869">
    <property type="interactions" value="82"/>
</dbReference>
<dbReference type="ComplexPortal" id="CPX-7461">
    <property type="entry name" value="DREAM transcriptional repressor complex, RBL2 variant"/>
</dbReference>
<dbReference type="CORUM" id="Q08999"/>
<dbReference type="DIP" id="DIP-425N"/>
<dbReference type="ELM" id="Q08999"/>
<dbReference type="FunCoup" id="Q08999">
    <property type="interactions" value="3371"/>
</dbReference>
<dbReference type="IntAct" id="Q08999">
    <property type="interactions" value="57"/>
</dbReference>
<dbReference type="MINT" id="Q08999"/>
<dbReference type="STRING" id="9606.ENSP00000262133"/>
<dbReference type="GlyCosmos" id="Q08999">
    <property type="glycosylation" value="1 site, 1 glycan"/>
</dbReference>
<dbReference type="GlyGen" id="Q08999">
    <property type="glycosylation" value="4 sites, 1 O-linked glycan (1 site)"/>
</dbReference>
<dbReference type="iPTMnet" id="Q08999"/>
<dbReference type="PhosphoSitePlus" id="Q08999"/>
<dbReference type="BioMuta" id="RBL2"/>
<dbReference type="DMDM" id="116242746"/>
<dbReference type="jPOST" id="Q08999"/>
<dbReference type="MassIVE" id="Q08999"/>
<dbReference type="PaxDb" id="9606-ENSP00000262133"/>
<dbReference type="PeptideAtlas" id="Q08999"/>
<dbReference type="ProteomicsDB" id="58652">
    <molecule id="Q08999-1"/>
</dbReference>
<dbReference type="ProteomicsDB" id="6997"/>
<dbReference type="Pumba" id="Q08999"/>
<dbReference type="Antibodypedia" id="4299">
    <property type="antibodies" value="469 antibodies from 39 providers"/>
</dbReference>
<dbReference type="DNASU" id="5934"/>
<dbReference type="Ensembl" id="ENST00000262133.11">
    <molecule id="Q08999-1"/>
    <property type="protein sequence ID" value="ENSP00000262133.6"/>
    <property type="gene ID" value="ENSG00000103479.17"/>
</dbReference>
<dbReference type="GeneID" id="5934"/>
<dbReference type="KEGG" id="hsa:5934"/>
<dbReference type="MANE-Select" id="ENST00000262133.11">
    <property type="protein sequence ID" value="ENSP00000262133.6"/>
    <property type="RefSeq nucleotide sequence ID" value="NM_005611.4"/>
    <property type="RefSeq protein sequence ID" value="NP_005602.3"/>
</dbReference>
<dbReference type="UCSC" id="uc002ehi.5">
    <molecule id="Q08999-1"/>
    <property type="organism name" value="human"/>
</dbReference>
<dbReference type="AGR" id="HGNC:9894"/>
<dbReference type="CTD" id="5934"/>
<dbReference type="DisGeNET" id="5934"/>
<dbReference type="GeneCards" id="RBL2"/>
<dbReference type="HGNC" id="HGNC:9894">
    <property type="gene designation" value="RBL2"/>
</dbReference>
<dbReference type="HPA" id="ENSG00000103479">
    <property type="expression patterns" value="Low tissue specificity"/>
</dbReference>
<dbReference type="MalaCards" id="RBL2"/>
<dbReference type="MIM" id="180203">
    <property type="type" value="gene"/>
</dbReference>
<dbReference type="MIM" id="619690">
    <property type="type" value="phenotype"/>
</dbReference>
<dbReference type="neXtProt" id="NX_Q08999"/>
<dbReference type="OpenTargets" id="ENSG00000103479"/>
<dbReference type="PharmGKB" id="PA34258"/>
<dbReference type="VEuPathDB" id="HostDB:ENSG00000103479"/>
<dbReference type="eggNOG" id="KOG1010">
    <property type="taxonomic scope" value="Eukaryota"/>
</dbReference>
<dbReference type="GeneTree" id="ENSGT00950000183202"/>
<dbReference type="HOGENOM" id="CLU_008943_0_0_1"/>
<dbReference type="InParanoid" id="Q08999"/>
<dbReference type="OMA" id="VYCQSTQ"/>
<dbReference type="OrthoDB" id="844594at2759"/>
<dbReference type="PAN-GO" id="Q08999">
    <property type="GO annotations" value="5 GO annotations based on evolutionary models"/>
</dbReference>
<dbReference type="PhylomeDB" id="Q08999"/>
<dbReference type="TreeFam" id="TF105568"/>
<dbReference type="PathwayCommons" id="Q08999"/>
<dbReference type="Reactome" id="R-HSA-1362277">
    <property type="pathway name" value="Transcription of E2F targets under negative control by DREAM complex"/>
</dbReference>
<dbReference type="Reactome" id="R-HSA-1362300">
    <property type="pathway name" value="Transcription of E2F targets under negative control by p107 (RBL1) and p130 (RBL2) in complex with HDAC1"/>
</dbReference>
<dbReference type="Reactome" id="R-HSA-1538133">
    <property type="pathway name" value="G0 and Early G1"/>
</dbReference>
<dbReference type="Reactome" id="R-HSA-6804114">
    <property type="pathway name" value="TP53 Regulates Transcription of Genes Involved in G2 Cell Cycle Arrest"/>
</dbReference>
<dbReference type="Reactome" id="R-HSA-69202">
    <property type="pathway name" value="Cyclin E associated events during G1/S transition"/>
</dbReference>
<dbReference type="Reactome" id="R-HSA-69205">
    <property type="pathway name" value="G1/S-Specific Transcription"/>
</dbReference>
<dbReference type="Reactome" id="R-HSA-69231">
    <property type="pathway name" value="Cyclin D associated events in G1"/>
</dbReference>
<dbReference type="Reactome" id="R-HSA-69656">
    <property type="pathway name" value="Cyclin A:Cdk2-associated events at S phase entry"/>
</dbReference>
<dbReference type="Reactome" id="R-HSA-9617828">
    <property type="pathway name" value="FOXO-mediated transcription of cell cycle genes"/>
</dbReference>
<dbReference type="SignaLink" id="Q08999"/>
<dbReference type="SIGNOR" id="Q08999"/>
<dbReference type="BioGRID-ORCS" id="5934">
    <property type="hits" value="15 hits in 1157 CRISPR screens"/>
</dbReference>
<dbReference type="ChiTaRS" id="RBL2">
    <property type="organism name" value="human"/>
</dbReference>
<dbReference type="EvolutionaryTrace" id="Q08999"/>
<dbReference type="GeneWiki" id="Retinoblastoma-like_protein_2"/>
<dbReference type="GenomeRNAi" id="5934"/>
<dbReference type="Pharos" id="Q08999">
    <property type="development level" value="Tbio"/>
</dbReference>
<dbReference type="PRO" id="PR:Q08999"/>
<dbReference type="Proteomes" id="UP000005640">
    <property type="component" value="Chromosome 16"/>
</dbReference>
<dbReference type="RNAct" id="Q08999">
    <property type="molecule type" value="protein"/>
</dbReference>
<dbReference type="Bgee" id="ENSG00000103479">
    <property type="expression patterns" value="Expressed in germinal epithelium of ovary and 205 other cell types or tissues"/>
</dbReference>
<dbReference type="ExpressionAtlas" id="Q08999">
    <property type="expression patterns" value="baseline and differential"/>
</dbReference>
<dbReference type="GO" id="GO:0000785">
    <property type="term" value="C:chromatin"/>
    <property type="evidence" value="ECO:0000318"/>
    <property type="project" value="GO_Central"/>
</dbReference>
<dbReference type="GO" id="GO:0005694">
    <property type="term" value="C:chromosome"/>
    <property type="evidence" value="ECO:0000314"/>
    <property type="project" value="HPA"/>
</dbReference>
<dbReference type="GO" id="GO:0005829">
    <property type="term" value="C:cytosol"/>
    <property type="evidence" value="ECO:0000314"/>
    <property type="project" value="HPA"/>
</dbReference>
<dbReference type="GO" id="GO:0070062">
    <property type="term" value="C:extracellular exosome"/>
    <property type="evidence" value="ECO:0007005"/>
    <property type="project" value="UniProtKB"/>
</dbReference>
<dbReference type="GO" id="GO:0005730">
    <property type="term" value="C:nucleolus"/>
    <property type="evidence" value="ECO:0000314"/>
    <property type="project" value="HPA"/>
</dbReference>
<dbReference type="GO" id="GO:0005654">
    <property type="term" value="C:nucleoplasm"/>
    <property type="evidence" value="ECO:0000314"/>
    <property type="project" value="HPA"/>
</dbReference>
<dbReference type="GO" id="GO:0005667">
    <property type="term" value="C:transcription regulator complex"/>
    <property type="evidence" value="ECO:0000318"/>
    <property type="project" value="GO_Central"/>
</dbReference>
<dbReference type="GO" id="GO:1990841">
    <property type="term" value="F:promoter-specific chromatin binding"/>
    <property type="evidence" value="ECO:0000314"/>
    <property type="project" value="MGI"/>
</dbReference>
<dbReference type="GO" id="GO:0000977">
    <property type="term" value="F:RNA polymerase II transcription regulatory region sequence-specific DNA binding"/>
    <property type="evidence" value="ECO:0000318"/>
    <property type="project" value="GO_Central"/>
</dbReference>
<dbReference type="GO" id="GO:0030154">
    <property type="term" value="P:cell differentiation"/>
    <property type="evidence" value="ECO:0000318"/>
    <property type="project" value="GO_Central"/>
</dbReference>
<dbReference type="GO" id="GO:0006325">
    <property type="term" value="P:chromatin organization"/>
    <property type="evidence" value="ECO:0007669"/>
    <property type="project" value="UniProtKB-KW"/>
</dbReference>
<dbReference type="GO" id="GO:2000134">
    <property type="term" value="P:negative regulation of G1/S transition of mitotic cell cycle"/>
    <property type="evidence" value="ECO:0000318"/>
    <property type="project" value="GO_Central"/>
</dbReference>
<dbReference type="GO" id="GO:0010629">
    <property type="term" value="P:negative regulation of gene expression"/>
    <property type="evidence" value="ECO:0000315"/>
    <property type="project" value="MGI"/>
</dbReference>
<dbReference type="GO" id="GO:0043550">
    <property type="term" value="P:regulation of lipid kinase activity"/>
    <property type="evidence" value="ECO:0000314"/>
    <property type="project" value="UniProtKB"/>
</dbReference>
<dbReference type="GO" id="GO:0006357">
    <property type="term" value="P:regulation of transcription by RNA polymerase II"/>
    <property type="evidence" value="ECO:0007669"/>
    <property type="project" value="InterPro"/>
</dbReference>
<dbReference type="CDD" id="cd20606">
    <property type="entry name" value="CYCLIN_RBL2"/>
    <property type="match status" value="1"/>
</dbReference>
<dbReference type="CDD" id="cd00043">
    <property type="entry name" value="CYCLIN_SF"/>
    <property type="match status" value="1"/>
</dbReference>
<dbReference type="FunFam" id="1.10.472.10:FF:000048">
    <property type="entry name" value="Retinoblastoma-like 2, isoform CRA_a"/>
    <property type="match status" value="1"/>
</dbReference>
<dbReference type="FunFam" id="1.10.472.10:FF:000049">
    <property type="entry name" value="Retinoblastoma-like 2, isoform CRA_a"/>
    <property type="match status" value="1"/>
</dbReference>
<dbReference type="FunFam" id="1.10.472.140:FF:000001">
    <property type="entry name" value="Retinoblastoma-like 2, isoform CRA_a"/>
    <property type="match status" value="1"/>
</dbReference>
<dbReference type="Gene3D" id="1.10.472.140">
    <property type="match status" value="1"/>
</dbReference>
<dbReference type="Gene3D" id="1.10.472.10">
    <property type="entry name" value="Cyclin-like"/>
    <property type="match status" value="3"/>
</dbReference>
<dbReference type="IDEAL" id="IID00663"/>
<dbReference type="InterPro" id="IPR013763">
    <property type="entry name" value="Cyclin-like_dom"/>
</dbReference>
<dbReference type="InterPro" id="IPR036915">
    <property type="entry name" value="Cyclin-like_sf"/>
</dbReference>
<dbReference type="InterPro" id="IPR002720">
    <property type="entry name" value="RB_A"/>
</dbReference>
<dbReference type="InterPro" id="IPR002719">
    <property type="entry name" value="RB_B"/>
</dbReference>
<dbReference type="InterPro" id="IPR015030">
    <property type="entry name" value="RB_C"/>
</dbReference>
<dbReference type="InterPro" id="IPR028309">
    <property type="entry name" value="RB_fam"/>
</dbReference>
<dbReference type="InterPro" id="IPR024599">
    <property type="entry name" value="RB_N"/>
</dbReference>
<dbReference type="PANTHER" id="PTHR13742">
    <property type="entry name" value="RETINOBLASTOMA-ASSOCIATED PROTEIN RB -RELATED"/>
    <property type="match status" value="1"/>
</dbReference>
<dbReference type="PANTHER" id="PTHR13742:SF8">
    <property type="entry name" value="RETINOBLASTOMA-LIKE PROTEIN 2"/>
    <property type="match status" value="1"/>
</dbReference>
<dbReference type="Pfam" id="PF11934">
    <property type="entry name" value="DUF3452"/>
    <property type="match status" value="1"/>
</dbReference>
<dbReference type="Pfam" id="PF01858">
    <property type="entry name" value="RB_A"/>
    <property type="match status" value="1"/>
</dbReference>
<dbReference type="Pfam" id="PF01857">
    <property type="entry name" value="RB_B"/>
    <property type="match status" value="1"/>
</dbReference>
<dbReference type="SMART" id="SM00385">
    <property type="entry name" value="CYCLIN"/>
    <property type="match status" value="2"/>
</dbReference>
<dbReference type="SMART" id="SM01367">
    <property type="entry name" value="DUF3452"/>
    <property type="match status" value="1"/>
</dbReference>
<dbReference type="SMART" id="SM01368">
    <property type="entry name" value="RB_A"/>
    <property type="match status" value="1"/>
</dbReference>
<dbReference type="SMART" id="SM01369">
    <property type="entry name" value="Rb_C"/>
    <property type="match status" value="1"/>
</dbReference>
<dbReference type="SUPFAM" id="SSF47954">
    <property type="entry name" value="Cyclin-like"/>
    <property type="match status" value="3"/>
</dbReference>
<accession>Q08999</accession>
<accession>B7Z913</accession>
<accession>Q15073</accession>
<accession>Q16084</accession>
<accession>Q8NE70</accession>
<accession>Q92812</accession>